<proteinExistence type="evidence at transcript level"/>
<reference key="1">
    <citation type="journal article" date="2005" name="Science">
        <title>The transcriptional landscape of the mammalian genome.</title>
        <authorList>
            <person name="Carninci P."/>
            <person name="Kasukawa T."/>
            <person name="Katayama S."/>
            <person name="Gough J."/>
            <person name="Frith M.C."/>
            <person name="Maeda N."/>
            <person name="Oyama R."/>
            <person name="Ravasi T."/>
            <person name="Lenhard B."/>
            <person name="Wells C."/>
            <person name="Kodzius R."/>
            <person name="Shimokawa K."/>
            <person name="Bajic V.B."/>
            <person name="Brenner S.E."/>
            <person name="Batalov S."/>
            <person name="Forrest A.R."/>
            <person name="Zavolan M."/>
            <person name="Davis M.J."/>
            <person name="Wilming L.G."/>
            <person name="Aidinis V."/>
            <person name="Allen J.E."/>
            <person name="Ambesi-Impiombato A."/>
            <person name="Apweiler R."/>
            <person name="Aturaliya R.N."/>
            <person name="Bailey T.L."/>
            <person name="Bansal M."/>
            <person name="Baxter L."/>
            <person name="Beisel K.W."/>
            <person name="Bersano T."/>
            <person name="Bono H."/>
            <person name="Chalk A.M."/>
            <person name="Chiu K.P."/>
            <person name="Choudhary V."/>
            <person name="Christoffels A."/>
            <person name="Clutterbuck D.R."/>
            <person name="Crowe M.L."/>
            <person name="Dalla E."/>
            <person name="Dalrymple B.P."/>
            <person name="de Bono B."/>
            <person name="Della Gatta G."/>
            <person name="di Bernardo D."/>
            <person name="Down T."/>
            <person name="Engstrom P."/>
            <person name="Fagiolini M."/>
            <person name="Faulkner G."/>
            <person name="Fletcher C.F."/>
            <person name="Fukushima T."/>
            <person name="Furuno M."/>
            <person name="Futaki S."/>
            <person name="Gariboldi M."/>
            <person name="Georgii-Hemming P."/>
            <person name="Gingeras T.R."/>
            <person name="Gojobori T."/>
            <person name="Green R.E."/>
            <person name="Gustincich S."/>
            <person name="Harbers M."/>
            <person name="Hayashi Y."/>
            <person name="Hensch T.K."/>
            <person name="Hirokawa N."/>
            <person name="Hill D."/>
            <person name="Huminiecki L."/>
            <person name="Iacono M."/>
            <person name="Ikeo K."/>
            <person name="Iwama A."/>
            <person name="Ishikawa T."/>
            <person name="Jakt M."/>
            <person name="Kanapin A."/>
            <person name="Katoh M."/>
            <person name="Kawasawa Y."/>
            <person name="Kelso J."/>
            <person name="Kitamura H."/>
            <person name="Kitano H."/>
            <person name="Kollias G."/>
            <person name="Krishnan S.P."/>
            <person name="Kruger A."/>
            <person name="Kummerfeld S.K."/>
            <person name="Kurochkin I.V."/>
            <person name="Lareau L.F."/>
            <person name="Lazarevic D."/>
            <person name="Lipovich L."/>
            <person name="Liu J."/>
            <person name="Liuni S."/>
            <person name="McWilliam S."/>
            <person name="Madan Babu M."/>
            <person name="Madera M."/>
            <person name="Marchionni L."/>
            <person name="Matsuda H."/>
            <person name="Matsuzawa S."/>
            <person name="Miki H."/>
            <person name="Mignone F."/>
            <person name="Miyake S."/>
            <person name="Morris K."/>
            <person name="Mottagui-Tabar S."/>
            <person name="Mulder N."/>
            <person name="Nakano N."/>
            <person name="Nakauchi H."/>
            <person name="Ng P."/>
            <person name="Nilsson R."/>
            <person name="Nishiguchi S."/>
            <person name="Nishikawa S."/>
            <person name="Nori F."/>
            <person name="Ohara O."/>
            <person name="Okazaki Y."/>
            <person name="Orlando V."/>
            <person name="Pang K.C."/>
            <person name="Pavan W.J."/>
            <person name="Pavesi G."/>
            <person name="Pesole G."/>
            <person name="Petrovsky N."/>
            <person name="Piazza S."/>
            <person name="Reed J."/>
            <person name="Reid J.F."/>
            <person name="Ring B.Z."/>
            <person name="Ringwald M."/>
            <person name="Rost B."/>
            <person name="Ruan Y."/>
            <person name="Salzberg S.L."/>
            <person name="Sandelin A."/>
            <person name="Schneider C."/>
            <person name="Schoenbach C."/>
            <person name="Sekiguchi K."/>
            <person name="Semple C.A."/>
            <person name="Seno S."/>
            <person name="Sessa L."/>
            <person name="Sheng Y."/>
            <person name="Shibata Y."/>
            <person name="Shimada H."/>
            <person name="Shimada K."/>
            <person name="Silva D."/>
            <person name="Sinclair B."/>
            <person name="Sperling S."/>
            <person name="Stupka E."/>
            <person name="Sugiura K."/>
            <person name="Sultana R."/>
            <person name="Takenaka Y."/>
            <person name="Taki K."/>
            <person name="Tammoja K."/>
            <person name="Tan S.L."/>
            <person name="Tang S."/>
            <person name="Taylor M.S."/>
            <person name="Tegner J."/>
            <person name="Teichmann S.A."/>
            <person name="Ueda H.R."/>
            <person name="van Nimwegen E."/>
            <person name="Verardo R."/>
            <person name="Wei C.L."/>
            <person name="Yagi K."/>
            <person name="Yamanishi H."/>
            <person name="Zabarovsky E."/>
            <person name="Zhu S."/>
            <person name="Zimmer A."/>
            <person name="Hide W."/>
            <person name="Bult C."/>
            <person name="Grimmond S.M."/>
            <person name="Teasdale R.D."/>
            <person name="Liu E.T."/>
            <person name="Brusic V."/>
            <person name="Quackenbush J."/>
            <person name="Wahlestedt C."/>
            <person name="Mattick J.S."/>
            <person name="Hume D.A."/>
            <person name="Kai C."/>
            <person name="Sasaki D."/>
            <person name="Tomaru Y."/>
            <person name="Fukuda S."/>
            <person name="Kanamori-Katayama M."/>
            <person name="Suzuki M."/>
            <person name="Aoki J."/>
            <person name="Arakawa T."/>
            <person name="Iida J."/>
            <person name="Imamura K."/>
            <person name="Itoh M."/>
            <person name="Kato T."/>
            <person name="Kawaji H."/>
            <person name="Kawagashira N."/>
            <person name="Kawashima T."/>
            <person name="Kojima M."/>
            <person name="Kondo S."/>
            <person name="Konno H."/>
            <person name="Nakano K."/>
            <person name="Ninomiya N."/>
            <person name="Nishio T."/>
            <person name="Okada M."/>
            <person name="Plessy C."/>
            <person name="Shibata K."/>
            <person name="Shiraki T."/>
            <person name="Suzuki S."/>
            <person name="Tagami M."/>
            <person name="Waki K."/>
            <person name="Watahiki A."/>
            <person name="Okamura-Oho Y."/>
            <person name="Suzuki H."/>
            <person name="Kawai J."/>
            <person name="Hayashizaki Y."/>
        </authorList>
    </citation>
    <scope>NUCLEOTIDE SEQUENCE [LARGE SCALE MRNA]</scope>
    <source>
        <strain>C57BL/6J</strain>
        <tissue>Testis</tissue>
    </source>
</reference>
<keyword id="KW-0067">ATP-binding</keyword>
<keyword id="KW-0963">Cytoplasm</keyword>
<keyword id="KW-0418">Kinase</keyword>
<keyword id="KW-0547">Nucleotide-binding</keyword>
<keyword id="KW-0539">Nucleus</keyword>
<keyword id="KW-1185">Reference proteome</keyword>
<keyword id="KW-0723">Serine/threonine-protein kinase</keyword>
<keyword id="KW-0808">Transferase</keyword>
<feature type="chain" id="PRO_0000085811" description="Cyclin-dependent kinase-like 1">
    <location>
        <begin position="1"/>
        <end position="352"/>
    </location>
</feature>
<feature type="domain" description="Protein kinase" evidence="2">
    <location>
        <begin position="4"/>
        <end position="287"/>
    </location>
</feature>
<feature type="short sequence motif" description="[NKR]KIAxRE">
    <location>
        <begin position="45"/>
        <end position="51"/>
    </location>
</feature>
<feature type="active site" description="Proton acceptor" evidence="2 3">
    <location>
        <position position="126"/>
    </location>
</feature>
<feature type="binding site" evidence="2">
    <location>
        <begin position="10"/>
        <end position="18"/>
    </location>
    <ligand>
        <name>ATP</name>
        <dbReference type="ChEBI" id="CHEBI:30616"/>
    </ligand>
</feature>
<feature type="binding site" evidence="2">
    <location>
        <position position="33"/>
    </location>
    <ligand>
        <name>ATP</name>
        <dbReference type="ChEBI" id="CHEBI:30616"/>
    </ligand>
</feature>
<comment type="catalytic activity">
    <reaction>
        <text>L-seryl-[protein] + ATP = O-phospho-L-seryl-[protein] + ADP + H(+)</text>
        <dbReference type="Rhea" id="RHEA:17989"/>
        <dbReference type="Rhea" id="RHEA-COMP:9863"/>
        <dbReference type="Rhea" id="RHEA-COMP:11604"/>
        <dbReference type="ChEBI" id="CHEBI:15378"/>
        <dbReference type="ChEBI" id="CHEBI:29999"/>
        <dbReference type="ChEBI" id="CHEBI:30616"/>
        <dbReference type="ChEBI" id="CHEBI:83421"/>
        <dbReference type="ChEBI" id="CHEBI:456216"/>
        <dbReference type="EC" id="2.7.11.22"/>
    </reaction>
</comment>
<comment type="catalytic activity">
    <reaction>
        <text>L-threonyl-[protein] + ATP = O-phospho-L-threonyl-[protein] + ADP + H(+)</text>
        <dbReference type="Rhea" id="RHEA:46608"/>
        <dbReference type="Rhea" id="RHEA-COMP:11060"/>
        <dbReference type="Rhea" id="RHEA-COMP:11605"/>
        <dbReference type="ChEBI" id="CHEBI:15378"/>
        <dbReference type="ChEBI" id="CHEBI:30013"/>
        <dbReference type="ChEBI" id="CHEBI:30616"/>
        <dbReference type="ChEBI" id="CHEBI:61977"/>
        <dbReference type="ChEBI" id="CHEBI:456216"/>
        <dbReference type="EC" id="2.7.11.22"/>
    </reaction>
</comment>
<comment type="subcellular location">
    <subcellularLocation>
        <location evidence="1">Cytoplasm</location>
    </subcellularLocation>
    <subcellularLocation>
        <location evidence="1">Nucleus</location>
    </subcellularLocation>
</comment>
<comment type="domain">
    <text>The [NKR]KIAxRE motif seems to be a cyclin-binding region.</text>
</comment>
<comment type="similarity">
    <text evidence="4">Belongs to the protein kinase superfamily. CMGC Ser/Thr protein kinase family. CDC2/CDKX subfamily.</text>
</comment>
<name>CDKL1_MOUSE</name>
<protein>
    <recommendedName>
        <fullName evidence="4">Cyclin-dependent kinase-like 1</fullName>
        <ecNumber>2.7.11.22</ecNumber>
    </recommendedName>
</protein>
<evidence type="ECO:0000250" key="1"/>
<evidence type="ECO:0000255" key="2">
    <source>
        <dbReference type="PROSITE-ProRule" id="PRU00159"/>
    </source>
</evidence>
<evidence type="ECO:0000255" key="3">
    <source>
        <dbReference type="PROSITE-ProRule" id="PRU10027"/>
    </source>
</evidence>
<evidence type="ECO:0000305" key="4"/>
<evidence type="ECO:0000312" key="5">
    <source>
        <dbReference type="MGI" id="MGI:1918341"/>
    </source>
</evidence>
<sequence length="352" mass="41024">MEKYEKIGKIGEGSYGVVFKCRNRDTGQIVAIKRFLETEDDPVIKKIALREIRMLKQLKHPNLVNLLEVFRRKRRLHLVFEYCDHTVLHELDRYQRGVPEPLVKNITWQTLQAVNFCHKHNCIHRDVKPENILITKQSAIKLCDFGFARLLTGPGDYYTDYVATRWYRSPELLVGDTQYGPPVDVWAIGCVFAELLSGVPLWPGKSDVDQLYLIRKTLGDLIPRHQQVFSMNQYFSGVKIPDPEDMETLELKFPNISYSALGFLKGCLHMDPAERLTCEQLLQHPYFDSIREVGELTRQHDKPARKTLRQSRKHLTGLQYLPQLTSSRILPALDNKKYHCSTKRFNYHFPNI</sequence>
<dbReference type="EC" id="2.7.11.22"/>
<dbReference type="EMBL" id="AK016781">
    <property type="protein sequence ID" value="BAC25497.1"/>
    <property type="molecule type" value="mRNA"/>
</dbReference>
<dbReference type="CCDS" id="CCDS25955.1"/>
<dbReference type="RefSeq" id="NP_899117.1">
    <property type="nucleotide sequence ID" value="NM_183294.2"/>
</dbReference>
<dbReference type="RefSeq" id="XP_017170691.1">
    <property type="nucleotide sequence ID" value="XM_017315202.1"/>
</dbReference>
<dbReference type="RefSeq" id="XP_017170692.1">
    <property type="nucleotide sequence ID" value="XM_017315203.3"/>
</dbReference>
<dbReference type="SMR" id="Q8CEQ0"/>
<dbReference type="BioGRID" id="214470">
    <property type="interactions" value="2"/>
</dbReference>
<dbReference type="FunCoup" id="Q8CEQ0">
    <property type="interactions" value="1728"/>
</dbReference>
<dbReference type="STRING" id="10090.ENSMUSP00000021377"/>
<dbReference type="iPTMnet" id="Q8CEQ0"/>
<dbReference type="PhosphoSitePlus" id="Q8CEQ0"/>
<dbReference type="PaxDb" id="10090-ENSMUSP00000021377"/>
<dbReference type="ProteomicsDB" id="281559"/>
<dbReference type="Antibodypedia" id="23644">
    <property type="antibodies" value="361 antibodies from 29 providers"/>
</dbReference>
<dbReference type="DNASU" id="71091"/>
<dbReference type="Ensembl" id="ENSMUST00000021377.5">
    <property type="protein sequence ID" value="ENSMUSP00000021377.5"/>
    <property type="gene ID" value="ENSMUSG00000020990.6"/>
</dbReference>
<dbReference type="GeneID" id="71091"/>
<dbReference type="KEGG" id="mmu:71091"/>
<dbReference type="UCSC" id="uc007nst.1">
    <property type="organism name" value="mouse"/>
</dbReference>
<dbReference type="AGR" id="MGI:1918341"/>
<dbReference type="CTD" id="8814"/>
<dbReference type="MGI" id="MGI:1918341">
    <property type="gene designation" value="Cdkl1"/>
</dbReference>
<dbReference type="VEuPathDB" id="HostDB:ENSMUSG00000020990"/>
<dbReference type="eggNOG" id="KOG0593">
    <property type="taxonomic scope" value="Eukaryota"/>
</dbReference>
<dbReference type="GeneTree" id="ENSGT00940000159132"/>
<dbReference type="HOGENOM" id="CLU_000288_181_1_1"/>
<dbReference type="InParanoid" id="Q8CEQ0"/>
<dbReference type="OMA" id="LHSTHYN"/>
<dbReference type="OrthoDB" id="548217at2759"/>
<dbReference type="PhylomeDB" id="Q8CEQ0"/>
<dbReference type="TreeFam" id="TF101031"/>
<dbReference type="BioGRID-ORCS" id="71091">
    <property type="hits" value="0 hits in 80 CRISPR screens"/>
</dbReference>
<dbReference type="ChiTaRS" id="Cdkl1">
    <property type="organism name" value="mouse"/>
</dbReference>
<dbReference type="PRO" id="PR:Q8CEQ0"/>
<dbReference type="Proteomes" id="UP000000589">
    <property type="component" value="Chromosome 12"/>
</dbReference>
<dbReference type="RNAct" id="Q8CEQ0">
    <property type="molecule type" value="protein"/>
</dbReference>
<dbReference type="Bgee" id="ENSMUSG00000020990">
    <property type="expression patterns" value="Expressed in right kidney and 85 other cell types or tissues"/>
</dbReference>
<dbReference type="ExpressionAtlas" id="Q8CEQ0">
    <property type="expression patterns" value="baseline and differential"/>
</dbReference>
<dbReference type="GO" id="GO:0035869">
    <property type="term" value="C:ciliary transition zone"/>
    <property type="evidence" value="ECO:0000250"/>
    <property type="project" value="UniProtKB"/>
</dbReference>
<dbReference type="GO" id="GO:0005737">
    <property type="term" value="C:cytoplasm"/>
    <property type="evidence" value="ECO:0007669"/>
    <property type="project" value="UniProtKB-SubCell"/>
</dbReference>
<dbReference type="GO" id="GO:0005654">
    <property type="term" value="C:nucleoplasm"/>
    <property type="evidence" value="ECO:0007669"/>
    <property type="project" value="Ensembl"/>
</dbReference>
<dbReference type="GO" id="GO:0005524">
    <property type="term" value="F:ATP binding"/>
    <property type="evidence" value="ECO:0007669"/>
    <property type="project" value="UniProtKB-KW"/>
</dbReference>
<dbReference type="GO" id="GO:0004693">
    <property type="term" value="F:cyclin-dependent protein serine/threonine kinase activity"/>
    <property type="evidence" value="ECO:0007669"/>
    <property type="project" value="UniProtKB-EC"/>
</dbReference>
<dbReference type="GO" id="GO:0106310">
    <property type="term" value="F:protein serine kinase activity"/>
    <property type="evidence" value="ECO:0007669"/>
    <property type="project" value="RHEA"/>
</dbReference>
<dbReference type="GO" id="GO:0007507">
    <property type="term" value="P:heart development"/>
    <property type="evidence" value="ECO:0007669"/>
    <property type="project" value="Ensembl"/>
</dbReference>
<dbReference type="GO" id="GO:1902017">
    <property type="term" value="P:regulation of cilium assembly"/>
    <property type="evidence" value="ECO:0000250"/>
    <property type="project" value="UniProtKB"/>
</dbReference>
<dbReference type="CDD" id="cd07847">
    <property type="entry name" value="STKc_CDKL1_4"/>
    <property type="match status" value="1"/>
</dbReference>
<dbReference type="FunFam" id="1.10.510.10:FF:000191">
    <property type="entry name" value="cyclin-dependent kinase-like 1 isoform X1"/>
    <property type="match status" value="1"/>
</dbReference>
<dbReference type="FunFam" id="3.30.200.20:FF:000049">
    <property type="entry name" value="cyclin-dependent kinase-like 1 isoform X1"/>
    <property type="match status" value="1"/>
</dbReference>
<dbReference type="Gene3D" id="3.30.200.20">
    <property type="entry name" value="Phosphorylase Kinase, domain 1"/>
    <property type="match status" value="1"/>
</dbReference>
<dbReference type="Gene3D" id="1.10.510.10">
    <property type="entry name" value="Transferase(Phosphotransferase) domain 1"/>
    <property type="match status" value="1"/>
</dbReference>
<dbReference type="InterPro" id="IPR050108">
    <property type="entry name" value="CDK"/>
</dbReference>
<dbReference type="InterPro" id="IPR011009">
    <property type="entry name" value="Kinase-like_dom_sf"/>
</dbReference>
<dbReference type="InterPro" id="IPR000719">
    <property type="entry name" value="Prot_kinase_dom"/>
</dbReference>
<dbReference type="InterPro" id="IPR017441">
    <property type="entry name" value="Protein_kinase_ATP_BS"/>
</dbReference>
<dbReference type="InterPro" id="IPR008271">
    <property type="entry name" value="Ser/Thr_kinase_AS"/>
</dbReference>
<dbReference type="PANTHER" id="PTHR24056">
    <property type="entry name" value="CELL DIVISION PROTEIN KINASE"/>
    <property type="match status" value="1"/>
</dbReference>
<dbReference type="PANTHER" id="PTHR24056:SF192">
    <property type="entry name" value="CYCLIN-DEPENDENT KINASE-LIKE 1"/>
    <property type="match status" value="1"/>
</dbReference>
<dbReference type="Pfam" id="PF00069">
    <property type="entry name" value="Pkinase"/>
    <property type="match status" value="1"/>
</dbReference>
<dbReference type="SMART" id="SM00220">
    <property type="entry name" value="S_TKc"/>
    <property type="match status" value="1"/>
</dbReference>
<dbReference type="SUPFAM" id="SSF56112">
    <property type="entry name" value="Protein kinase-like (PK-like)"/>
    <property type="match status" value="1"/>
</dbReference>
<dbReference type="PROSITE" id="PS00107">
    <property type="entry name" value="PROTEIN_KINASE_ATP"/>
    <property type="match status" value="1"/>
</dbReference>
<dbReference type="PROSITE" id="PS50011">
    <property type="entry name" value="PROTEIN_KINASE_DOM"/>
    <property type="match status" value="1"/>
</dbReference>
<dbReference type="PROSITE" id="PS00108">
    <property type="entry name" value="PROTEIN_KINASE_ST"/>
    <property type="match status" value="1"/>
</dbReference>
<organism>
    <name type="scientific">Mus musculus</name>
    <name type="common">Mouse</name>
    <dbReference type="NCBI Taxonomy" id="10090"/>
    <lineage>
        <taxon>Eukaryota</taxon>
        <taxon>Metazoa</taxon>
        <taxon>Chordata</taxon>
        <taxon>Craniata</taxon>
        <taxon>Vertebrata</taxon>
        <taxon>Euteleostomi</taxon>
        <taxon>Mammalia</taxon>
        <taxon>Eutheria</taxon>
        <taxon>Euarchontoglires</taxon>
        <taxon>Glires</taxon>
        <taxon>Rodentia</taxon>
        <taxon>Myomorpha</taxon>
        <taxon>Muroidea</taxon>
        <taxon>Muridae</taxon>
        <taxon>Murinae</taxon>
        <taxon>Mus</taxon>
        <taxon>Mus</taxon>
    </lineage>
</organism>
<accession>Q8CEQ0</accession>
<gene>
    <name evidence="5" type="primary">Cdkl1</name>
</gene>